<gene>
    <name evidence="1" type="primary">argJ</name>
    <name type="ordered locus">aq_970</name>
</gene>
<sequence>MAEILMGVGNAGLKESGNPDILVVYLPYPCTASFVFTDNYFKAGSVIYSERIARDKERIRAFVVNSGNANCGTGEEGIKHAEMMAEKVAQILDIPKDEVFVFSTGIIGKYLPIENVLKGIEQACSNLELLDLKRASEVISTTDRFPKYDFAKAGEVETFGFAKGAGMIHPSMATMLAFVFTNANLEYLTLKRIHESVTEKTFNSITVDGCESTNDAFGIISLGEVEADPETVEFELLKVSESLAKQIVADGEGATKIIRVNVRSAITEIKAREIAEAIANSLLVKTAVFGRDPNWGRIAAAAGSTEFPIDPFKLEIYVGGYLLYDGKPHDENLEKAKKHLIEDREVDITVELNEGEYEWVCYSSDIGYDYIKLNAEYTT</sequence>
<dbReference type="EC" id="2.3.1.35" evidence="1"/>
<dbReference type="EC" id="2.3.1.1" evidence="1"/>
<dbReference type="EMBL" id="AE000657">
    <property type="protein sequence ID" value="AAC07058.1"/>
    <property type="molecule type" value="Genomic_DNA"/>
</dbReference>
<dbReference type="PIR" id="A70384">
    <property type="entry name" value="A70384"/>
</dbReference>
<dbReference type="RefSeq" id="NP_213663.1">
    <property type="nucleotide sequence ID" value="NC_000918.1"/>
</dbReference>
<dbReference type="RefSeq" id="WP_010880601.1">
    <property type="nucleotide sequence ID" value="NC_000918.1"/>
</dbReference>
<dbReference type="SMR" id="O67100"/>
<dbReference type="STRING" id="224324.aq_970"/>
<dbReference type="EnsemblBacteria" id="AAC07058">
    <property type="protein sequence ID" value="AAC07058"/>
    <property type="gene ID" value="aq_970"/>
</dbReference>
<dbReference type="KEGG" id="aae:aq_970"/>
<dbReference type="PATRIC" id="fig|224324.8.peg.763"/>
<dbReference type="eggNOG" id="COG1364">
    <property type="taxonomic scope" value="Bacteria"/>
</dbReference>
<dbReference type="HOGENOM" id="CLU_027172_1_0_0"/>
<dbReference type="InParanoid" id="O67100"/>
<dbReference type="OrthoDB" id="9804242at2"/>
<dbReference type="UniPathway" id="UPA00068">
    <property type="reaction ID" value="UER00106"/>
</dbReference>
<dbReference type="UniPathway" id="UPA00068">
    <property type="reaction ID" value="UER00111"/>
</dbReference>
<dbReference type="Proteomes" id="UP000000798">
    <property type="component" value="Chromosome"/>
</dbReference>
<dbReference type="GO" id="GO:0005737">
    <property type="term" value="C:cytoplasm"/>
    <property type="evidence" value="ECO:0007669"/>
    <property type="project" value="UniProtKB-SubCell"/>
</dbReference>
<dbReference type="GO" id="GO:0004358">
    <property type="term" value="F:glutamate N-acetyltransferase activity"/>
    <property type="evidence" value="ECO:0007669"/>
    <property type="project" value="UniProtKB-UniRule"/>
</dbReference>
<dbReference type="GO" id="GO:0004042">
    <property type="term" value="F:L-glutamate N-acetyltransferase activity"/>
    <property type="evidence" value="ECO:0000318"/>
    <property type="project" value="GO_Central"/>
</dbReference>
<dbReference type="GO" id="GO:0006526">
    <property type="term" value="P:L-arginine biosynthetic process"/>
    <property type="evidence" value="ECO:0007669"/>
    <property type="project" value="UniProtKB-UniRule"/>
</dbReference>
<dbReference type="GO" id="GO:0006592">
    <property type="term" value="P:ornithine biosynthetic process"/>
    <property type="evidence" value="ECO:0000318"/>
    <property type="project" value="GO_Central"/>
</dbReference>
<dbReference type="CDD" id="cd02152">
    <property type="entry name" value="OAT"/>
    <property type="match status" value="1"/>
</dbReference>
<dbReference type="FunFam" id="3.10.20.340:FF:000003">
    <property type="entry name" value="Arginine biosynthesis bifunctional protein ArgJ"/>
    <property type="match status" value="1"/>
</dbReference>
<dbReference type="Gene3D" id="3.10.20.340">
    <property type="entry name" value="ArgJ beta chain, C-terminal domain"/>
    <property type="match status" value="1"/>
</dbReference>
<dbReference type="Gene3D" id="3.60.70.12">
    <property type="entry name" value="L-amino peptidase D-ALA esterase/amidase"/>
    <property type="match status" value="1"/>
</dbReference>
<dbReference type="HAMAP" id="MF_01106">
    <property type="entry name" value="ArgJ"/>
    <property type="match status" value="1"/>
</dbReference>
<dbReference type="InterPro" id="IPR002813">
    <property type="entry name" value="Arg_biosynth_ArgJ"/>
</dbReference>
<dbReference type="InterPro" id="IPR016117">
    <property type="entry name" value="ArgJ-like_dom_sf"/>
</dbReference>
<dbReference type="InterPro" id="IPR042195">
    <property type="entry name" value="ArgJ_beta_C"/>
</dbReference>
<dbReference type="NCBIfam" id="TIGR00120">
    <property type="entry name" value="ArgJ"/>
    <property type="match status" value="1"/>
</dbReference>
<dbReference type="NCBIfam" id="NF003802">
    <property type="entry name" value="PRK05388.1"/>
    <property type="match status" value="1"/>
</dbReference>
<dbReference type="PANTHER" id="PTHR23100">
    <property type="entry name" value="ARGININE BIOSYNTHESIS BIFUNCTIONAL PROTEIN ARGJ"/>
    <property type="match status" value="1"/>
</dbReference>
<dbReference type="PANTHER" id="PTHR23100:SF0">
    <property type="entry name" value="ARGININE BIOSYNTHESIS BIFUNCTIONAL PROTEIN ARGJ, MITOCHONDRIAL"/>
    <property type="match status" value="1"/>
</dbReference>
<dbReference type="Pfam" id="PF01960">
    <property type="entry name" value="ArgJ"/>
    <property type="match status" value="1"/>
</dbReference>
<dbReference type="SUPFAM" id="SSF56266">
    <property type="entry name" value="DmpA/ArgJ-like"/>
    <property type="match status" value="1"/>
</dbReference>
<evidence type="ECO:0000255" key="1">
    <source>
        <dbReference type="HAMAP-Rule" id="MF_01106"/>
    </source>
</evidence>
<accession>O67100</accession>
<protein>
    <recommendedName>
        <fullName evidence="1">Arginine biosynthesis bifunctional protein ArgJ</fullName>
    </recommendedName>
    <domain>
        <recommendedName>
            <fullName evidence="1">Glutamate N-acetyltransferase</fullName>
            <ecNumber evidence="1">2.3.1.35</ecNumber>
        </recommendedName>
        <alternativeName>
            <fullName evidence="1">Ornithine acetyltransferase</fullName>
            <shortName evidence="1">OATase</shortName>
        </alternativeName>
        <alternativeName>
            <fullName evidence="1">Ornithine transacetylase</fullName>
        </alternativeName>
    </domain>
    <domain>
        <recommendedName>
            <fullName evidence="1">Amino-acid acetyltransferase</fullName>
            <ecNumber evidence="1">2.3.1.1</ecNumber>
        </recommendedName>
        <alternativeName>
            <fullName evidence="1">N-acetylglutamate synthase</fullName>
            <shortName evidence="1">AGSase</shortName>
        </alternativeName>
    </domain>
    <component>
        <recommendedName>
            <fullName evidence="1">Arginine biosynthesis bifunctional protein ArgJ alpha chain</fullName>
        </recommendedName>
    </component>
    <component>
        <recommendedName>
            <fullName evidence="1">Arginine biosynthesis bifunctional protein ArgJ beta chain</fullName>
        </recommendedName>
    </component>
</protein>
<organism>
    <name type="scientific">Aquifex aeolicus (strain VF5)</name>
    <dbReference type="NCBI Taxonomy" id="224324"/>
    <lineage>
        <taxon>Bacteria</taxon>
        <taxon>Pseudomonadati</taxon>
        <taxon>Aquificota</taxon>
        <taxon>Aquificia</taxon>
        <taxon>Aquificales</taxon>
        <taxon>Aquificaceae</taxon>
        <taxon>Aquifex</taxon>
    </lineage>
</organism>
<comment type="function">
    <text evidence="1">Catalyzes two activities which are involved in the cyclic version of arginine biosynthesis: the synthesis of N-acetylglutamate from glutamate and acetyl-CoA as the acetyl donor, and of ornithine by transacetylation between N(2)-acetylornithine and glutamate.</text>
</comment>
<comment type="catalytic activity">
    <reaction evidence="1">
        <text>N(2)-acetyl-L-ornithine + L-glutamate = N-acetyl-L-glutamate + L-ornithine</text>
        <dbReference type="Rhea" id="RHEA:15349"/>
        <dbReference type="ChEBI" id="CHEBI:29985"/>
        <dbReference type="ChEBI" id="CHEBI:44337"/>
        <dbReference type="ChEBI" id="CHEBI:46911"/>
        <dbReference type="ChEBI" id="CHEBI:57805"/>
        <dbReference type="EC" id="2.3.1.35"/>
    </reaction>
</comment>
<comment type="catalytic activity">
    <reaction evidence="1">
        <text>L-glutamate + acetyl-CoA = N-acetyl-L-glutamate + CoA + H(+)</text>
        <dbReference type="Rhea" id="RHEA:24292"/>
        <dbReference type="ChEBI" id="CHEBI:15378"/>
        <dbReference type="ChEBI" id="CHEBI:29985"/>
        <dbReference type="ChEBI" id="CHEBI:44337"/>
        <dbReference type="ChEBI" id="CHEBI:57287"/>
        <dbReference type="ChEBI" id="CHEBI:57288"/>
        <dbReference type="EC" id="2.3.1.1"/>
    </reaction>
</comment>
<comment type="pathway">
    <text evidence="1">Amino-acid biosynthesis; L-arginine biosynthesis; L-ornithine and N-acetyl-L-glutamate from L-glutamate and N(2)-acetyl-L-ornithine (cyclic): step 1/1.</text>
</comment>
<comment type="pathway">
    <text evidence="1">Amino-acid biosynthesis; L-arginine biosynthesis; N(2)-acetyl-L-ornithine from L-glutamate: step 1/4.</text>
</comment>
<comment type="subunit">
    <text evidence="1">Heterotetramer of two alpha and two beta chains.</text>
</comment>
<comment type="subcellular location">
    <subcellularLocation>
        <location evidence="1">Cytoplasm</location>
    </subcellularLocation>
</comment>
<comment type="similarity">
    <text evidence="1">Belongs to the ArgJ family.</text>
</comment>
<keyword id="KW-0012">Acyltransferase</keyword>
<keyword id="KW-0028">Amino-acid biosynthesis</keyword>
<keyword id="KW-0055">Arginine biosynthesis</keyword>
<keyword id="KW-0068">Autocatalytic cleavage</keyword>
<keyword id="KW-0963">Cytoplasm</keyword>
<keyword id="KW-0511">Multifunctional enzyme</keyword>
<keyword id="KW-1185">Reference proteome</keyword>
<keyword id="KW-0808">Transferase</keyword>
<proteinExistence type="inferred from homology"/>
<reference key="1">
    <citation type="journal article" date="1998" name="Nature">
        <title>The complete genome of the hyperthermophilic bacterium Aquifex aeolicus.</title>
        <authorList>
            <person name="Deckert G."/>
            <person name="Warren P.V."/>
            <person name="Gaasterland T."/>
            <person name="Young W.G."/>
            <person name="Lenox A.L."/>
            <person name="Graham D.E."/>
            <person name="Overbeek R."/>
            <person name="Snead M.A."/>
            <person name="Keller M."/>
            <person name="Aujay M."/>
            <person name="Huber R."/>
            <person name="Feldman R.A."/>
            <person name="Short J.M."/>
            <person name="Olsen G.J."/>
            <person name="Swanson R.V."/>
        </authorList>
    </citation>
    <scope>NUCLEOTIDE SEQUENCE [LARGE SCALE GENOMIC DNA]</scope>
    <source>
        <strain>VF5</strain>
    </source>
</reference>
<feature type="chain" id="PRO_0000002101" description="Arginine biosynthesis bifunctional protein ArgJ alpha chain" evidence="1">
    <location>
        <begin position="1"/>
        <end position="173"/>
    </location>
</feature>
<feature type="chain" id="PRO_0000002102" description="Arginine biosynthesis bifunctional protein ArgJ beta chain" evidence="1">
    <location>
        <begin position="174"/>
        <end position="379"/>
    </location>
</feature>
<feature type="active site" description="Nucleophile" evidence="1">
    <location>
        <position position="174"/>
    </location>
</feature>
<feature type="binding site" evidence="1">
    <location>
        <position position="141"/>
    </location>
    <ligand>
        <name>substrate</name>
    </ligand>
</feature>
<feature type="binding site" evidence="1">
    <location>
        <position position="163"/>
    </location>
    <ligand>
        <name>substrate</name>
    </ligand>
</feature>
<feature type="binding site" evidence="1">
    <location>
        <position position="174"/>
    </location>
    <ligand>
        <name>substrate</name>
    </ligand>
</feature>
<feature type="binding site" evidence="1">
    <location>
        <position position="252"/>
    </location>
    <ligand>
        <name>substrate</name>
    </ligand>
</feature>
<feature type="binding site" evidence="1">
    <location>
        <position position="374"/>
    </location>
    <ligand>
        <name>substrate</name>
    </ligand>
</feature>
<feature type="binding site" evidence="1">
    <location>
        <position position="379"/>
    </location>
    <ligand>
        <name>substrate</name>
    </ligand>
</feature>
<feature type="site" description="Involved in the stabilization of negative charge on the oxyanion by the formation of the oxyanion hole" evidence="1">
    <location>
        <position position="104"/>
    </location>
</feature>
<feature type="site" description="Involved in the stabilization of negative charge on the oxyanion by the formation of the oxyanion hole" evidence="1">
    <location>
        <position position="105"/>
    </location>
</feature>
<feature type="site" description="Cleavage; by autolysis" evidence="1">
    <location>
        <begin position="173"/>
        <end position="174"/>
    </location>
</feature>
<name>ARGJ_AQUAE</name>